<reference key="1">
    <citation type="submission" date="2006-01" db="EMBL/GenBank/DDBJ databases">
        <title>Complete sequence of Anaeromyxobacter dehalogenans 2CP-C.</title>
        <authorList>
            <person name="Copeland A."/>
            <person name="Lucas S."/>
            <person name="Lapidus A."/>
            <person name="Barry K."/>
            <person name="Detter J.C."/>
            <person name="Glavina T."/>
            <person name="Hammon N."/>
            <person name="Israni S."/>
            <person name="Pitluck S."/>
            <person name="Brettin T."/>
            <person name="Bruce D."/>
            <person name="Han C."/>
            <person name="Tapia R."/>
            <person name="Gilna P."/>
            <person name="Kiss H."/>
            <person name="Schmutz J."/>
            <person name="Larimer F."/>
            <person name="Land M."/>
            <person name="Kyrpides N."/>
            <person name="Anderson I."/>
            <person name="Sanford R.A."/>
            <person name="Ritalahti K.M."/>
            <person name="Thomas H.S."/>
            <person name="Kirby J.R."/>
            <person name="Zhulin I.B."/>
            <person name="Loeffler F.E."/>
            <person name="Richardson P."/>
        </authorList>
    </citation>
    <scope>NUCLEOTIDE SEQUENCE [LARGE SCALE GENOMIC DNA]</scope>
    <source>
        <strain>2CP-C</strain>
    </source>
</reference>
<comment type="function">
    <text evidence="1">Involved in the de novo purine biosynthesis. Catalyzes the transfer of formate to 5-phospho-ribosyl-glycinamide (GAR), producing 5-phospho-ribosyl-N-formylglycinamide (FGAR). Formate is provided by PurU via hydrolysis of 10-formyl-tetrahydrofolate.</text>
</comment>
<comment type="catalytic activity">
    <reaction evidence="1">
        <text>N(1)-(5-phospho-beta-D-ribosyl)glycinamide + formate + ATP = N(2)-formyl-N(1)-(5-phospho-beta-D-ribosyl)glycinamide + ADP + phosphate + H(+)</text>
        <dbReference type="Rhea" id="RHEA:24829"/>
        <dbReference type="ChEBI" id="CHEBI:15378"/>
        <dbReference type="ChEBI" id="CHEBI:15740"/>
        <dbReference type="ChEBI" id="CHEBI:30616"/>
        <dbReference type="ChEBI" id="CHEBI:43474"/>
        <dbReference type="ChEBI" id="CHEBI:143788"/>
        <dbReference type="ChEBI" id="CHEBI:147286"/>
        <dbReference type="ChEBI" id="CHEBI:456216"/>
        <dbReference type="EC" id="6.3.1.21"/>
    </reaction>
    <physiologicalReaction direction="left-to-right" evidence="1">
        <dbReference type="Rhea" id="RHEA:24830"/>
    </physiologicalReaction>
</comment>
<comment type="pathway">
    <text evidence="1">Purine metabolism; IMP biosynthesis via de novo pathway; N(2)-formyl-N(1)-(5-phospho-D-ribosyl)glycinamide from N(1)-(5-phospho-D-ribosyl)glycinamide (formate route): step 1/1.</text>
</comment>
<comment type="subunit">
    <text evidence="1">Homodimer.</text>
</comment>
<comment type="similarity">
    <text evidence="1">Belongs to the PurK/PurT family.</text>
</comment>
<protein>
    <recommendedName>
        <fullName evidence="1">Formate-dependent phosphoribosylglycinamide formyltransferase</fullName>
        <ecNumber evidence="1">6.3.1.21</ecNumber>
    </recommendedName>
    <alternativeName>
        <fullName evidence="1">5'-phosphoribosylglycinamide transformylase 2</fullName>
    </alternativeName>
    <alternativeName>
        <fullName evidence="1">Formate-dependent GAR transformylase</fullName>
    </alternativeName>
    <alternativeName>
        <fullName evidence="1">GAR transformylase 2</fullName>
        <shortName evidence="1">GART 2</shortName>
    </alternativeName>
    <alternativeName>
        <fullName evidence="1">Non-folate glycinamide ribonucleotide transformylase</fullName>
    </alternativeName>
    <alternativeName>
        <fullName evidence="1">Phosphoribosylglycinamide formyltransferase 2</fullName>
    </alternativeName>
</protein>
<evidence type="ECO:0000255" key="1">
    <source>
        <dbReference type="HAMAP-Rule" id="MF_01643"/>
    </source>
</evidence>
<name>PURT_ANADE</name>
<feature type="chain" id="PRO_0000319121" description="Formate-dependent phosphoribosylglycinamide formyltransferase">
    <location>
        <begin position="1"/>
        <end position="387"/>
    </location>
</feature>
<feature type="domain" description="ATP-grasp" evidence="1">
    <location>
        <begin position="109"/>
        <end position="300"/>
    </location>
</feature>
<feature type="binding site" evidence="1">
    <location>
        <begin position="12"/>
        <end position="13"/>
    </location>
    <ligand>
        <name>N(1)-(5-phospho-beta-D-ribosyl)glycinamide</name>
        <dbReference type="ChEBI" id="CHEBI:143788"/>
    </ligand>
</feature>
<feature type="binding site" evidence="1">
    <location>
        <position position="72"/>
    </location>
    <ligand>
        <name>N(1)-(5-phospho-beta-D-ribosyl)glycinamide</name>
        <dbReference type="ChEBI" id="CHEBI:143788"/>
    </ligand>
</feature>
<feature type="binding site" evidence="1">
    <location>
        <position position="104"/>
    </location>
    <ligand>
        <name>ATP</name>
        <dbReference type="ChEBI" id="CHEBI:30616"/>
    </ligand>
</feature>
<feature type="binding site" evidence="1">
    <location>
        <position position="145"/>
    </location>
    <ligand>
        <name>ATP</name>
        <dbReference type="ChEBI" id="CHEBI:30616"/>
    </ligand>
</feature>
<feature type="binding site" evidence="1">
    <location>
        <begin position="150"/>
        <end position="155"/>
    </location>
    <ligand>
        <name>ATP</name>
        <dbReference type="ChEBI" id="CHEBI:30616"/>
    </ligand>
</feature>
<feature type="binding site" evidence="1">
    <location>
        <begin position="185"/>
        <end position="188"/>
    </location>
    <ligand>
        <name>ATP</name>
        <dbReference type="ChEBI" id="CHEBI:30616"/>
    </ligand>
</feature>
<feature type="binding site" evidence="1">
    <location>
        <position position="193"/>
    </location>
    <ligand>
        <name>ATP</name>
        <dbReference type="ChEBI" id="CHEBI:30616"/>
    </ligand>
</feature>
<feature type="binding site" evidence="1">
    <location>
        <position position="258"/>
    </location>
    <ligand>
        <name>Mg(2+)</name>
        <dbReference type="ChEBI" id="CHEBI:18420"/>
    </ligand>
</feature>
<feature type="binding site" evidence="1">
    <location>
        <position position="270"/>
    </location>
    <ligand>
        <name>Mg(2+)</name>
        <dbReference type="ChEBI" id="CHEBI:18420"/>
    </ligand>
</feature>
<feature type="binding site" evidence="1">
    <location>
        <position position="277"/>
    </location>
    <ligand>
        <name>N(1)-(5-phospho-beta-D-ribosyl)glycinamide</name>
        <dbReference type="ChEBI" id="CHEBI:143788"/>
    </ligand>
</feature>
<feature type="binding site" evidence="1">
    <location>
        <position position="347"/>
    </location>
    <ligand>
        <name>N(1)-(5-phospho-beta-D-ribosyl)glycinamide</name>
        <dbReference type="ChEBI" id="CHEBI:143788"/>
    </ligand>
</feature>
<feature type="binding site" evidence="1">
    <location>
        <begin position="354"/>
        <end position="355"/>
    </location>
    <ligand>
        <name>N(1)-(5-phospho-beta-D-ribosyl)glycinamide</name>
        <dbReference type="ChEBI" id="CHEBI:143788"/>
    </ligand>
</feature>
<gene>
    <name evidence="1" type="primary">purT</name>
    <name type="ordered locus">Adeh_2051</name>
</gene>
<organism>
    <name type="scientific">Anaeromyxobacter dehalogenans (strain 2CP-C)</name>
    <dbReference type="NCBI Taxonomy" id="290397"/>
    <lineage>
        <taxon>Bacteria</taxon>
        <taxon>Pseudomonadati</taxon>
        <taxon>Myxococcota</taxon>
        <taxon>Myxococcia</taxon>
        <taxon>Myxococcales</taxon>
        <taxon>Cystobacterineae</taxon>
        <taxon>Anaeromyxobacteraceae</taxon>
        <taxon>Anaeromyxobacter</taxon>
    </lineage>
</organism>
<proteinExistence type="inferred from homology"/>
<sequence>MRKKILLLGSGELGKEFTIAAQRLGQEIIAVDAYDGAPAQQVAHAREVVSMLDGAALDALVAKHRPDVIVPEIEAIRTERLQAYEAQGVQVVPSARAAAFTMNRRAIRDLAARELGLATARYAYASTPEAFRAAVHEIGLPCVVKPLMSSSGKGQSVVRAEGDLEAAWAYAMSGTRGDLREVIVEEFIPFDSEITLLTVTQRRGETLFCPPIGHRQERGDYQESWQPHPVPPPLLEEARRMAGAVTRALGGAGIFGVEFFLAKDRIWFSELSPRPHDTGMVTLAGTQPLNEFELHLRAVLGLPIPPITLVRPGASAVILARGTGAPVVRGLESALAEPGADVRIFGKPALRPHRRMGVALVSGAPGDDPRALVERARAVAARVSVDP</sequence>
<dbReference type="EC" id="6.3.1.21" evidence="1"/>
<dbReference type="EMBL" id="CP000251">
    <property type="protein sequence ID" value="ABC81821.1"/>
    <property type="molecule type" value="Genomic_DNA"/>
</dbReference>
<dbReference type="RefSeq" id="WP_011421103.1">
    <property type="nucleotide sequence ID" value="NC_007760.1"/>
</dbReference>
<dbReference type="SMR" id="Q2IJJ5"/>
<dbReference type="STRING" id="290397.Adeh_2051"/>
<dbReference type="KEGG" id="ade:Adeh_2051"/>
<dbReference type="eggNOG" id="COG0027">
    <property type="taxonomic scope" value="Bacteria"/>
</dbReference>
<dbReference type="HOGENOM" id="CLU_011534_1_3_7"/>
<dbReference type="OrthoDB" id="24041at2"/>
<dbReference type="UniPathway" id="UPA00074">
    <property type="reaction ID" value="UER00127"/>
</dbReference>
<dbReference type="Proteomes" id="UP000001935">
    <property type="component" value="Chromosome"/>
</dbReference>
<dbReference type="GO" id="GO:0005829">
    <property type="term" value="C:cytosol"/>
    <property type="evidence" value="ECO:0007669"/>
    <property type="project" value="TreeGrafter"/>
</dbReference>
<dbReference type="GO" id="GO:0005524">
    <property type="term" value="F:ATP binding"/>
    <property type="evidence" value="ECO:0007669"/>
    <property type="project" value="UniProtKB-UniRule"/>
</dbReference>
<dbReference type="GO" id="GO:0000287">
    <property type="term" value="F:magnesium ion binding"/>
    <property type="evidence" value="ECO:0007669"/>
    <property type="project" value="InterPro"/>
</dbReference>
<dbReference type="GO" id="GO:0043815">
    <property type="term" value="F:phosphoribosylglycinamide formyltransferase 2 activity"/>
    <property type="evidence" value="ECO:0007669"/>
    <property type="project" value="UniProtKB-UniRule"/>
</dbReference>
<dbReference type="GO" id="GO:0004644">
    <property type="term" value="F:phosphoribosylglycinamide formyltransferase activity"/>
    <property type="evidence" value="ECO:0007669"/>
    <property type="project" value="InterPro"/>
</dbReference>
<dbReference type="GO" id="GO:0006189">
    <property type="term" value="P:'de novo' IMP biosynthetic process"/>
    <property type="evidence" value="ECO:0007669"/>
    <property type="project" value="UniProtKB-UniRule"/>
</dbReference>
<dbReference type="FunFam" id="3.30.1490.20:FF:000013">
    <property type="entry name" value="Formate-dependent phosphoribosylglycinamide formyltransferase"/>
    <property type="match status" value="1"/>
</dbReference>
<dbReference type="FunFam" id="3.40.50.20:FF:000022">
    <property type="entry name" value="Formate-dependent phosphoribosylglycinamide formyltransferase"/>
    <property type="match status" value="1"/>
</dbReference>
<dbReference type="Gene3D" id="3.40.50.20">
    <property type="match status" value="1"/>
</dbReference>
<dbReference type="Gene3D" id="3.30.1490.20">
    <property type="entry name" value="ATP-grasp fold, A domain"/>
    <property type="match status" value="1"/>
</dbReference>
<dbReference type="Gene3D" id="3.30.470.20">
    <property type="entry name" value="ATP-grasp fold, B domain"/>
    <property type="match status" value="1"/>
</dbReference>
<dbReference type="HAMAP" id="MF_01643">
    <property type="entry name" value="PurT"/>
    <property type="match status" value="1"/>
</dbReference>
<dbReference type="InterPro" id="IPR011761">
    <property type="entry name" value="ATP-grasp"/>
</dbReference>
<dbReference type="InterPro" id="IPR003135">
    <property type="entry name" value="ATP-grasp_carboxylate-amine"/>
</dbReference>
<dbReference type="InterPro" id="IPR013815">
    <property type="entry name" value="ATP_grasp_subdomain_1"/>
</dbReference>
<dbReference type="InterPro" id="IPR016185">
    <property type="entry name" value="PreATP-grasp_dom_sf"/>
</dbReference>
<dbReference type="InterPro" id="IPR005862">
    <property type="entry name" value="PurT"/>
</dbReference>
<dbReference type="InterPro" id="IPR054350">
    <property type="entry name" value="PurT/PurK_preATP-grasp"/>
</dbReference>
<dbReference type="InterPro" id="IPR048740">
    <property type="entry name" value="PurT_C"/>
</dbReference>
<dbReference type="InterPro" id="IPR011054">
    <property type="entry name" value="Rudment_hybrid_motif"/>
</dbReference>
<dbReference type="NCBIfam" id="NF006766">
    <property type="entry name" value="PRK09288.1"/>
    <property type="match status" value="1"/>
</dbReference>
<dbReference type="NCBIfam" id="TIGR01142">
    <property type="entry name" value="purT"/>
    <property type="match status" value="1"/>
</dbReference>
<dbReference type="PANTHER" id="PTHR43055">
    <property type="entry name" value="FORMATE-DEPENDENT PHOSPHORIBOSYLGLYCINAMIDE FORMYLTRANSFERASE"/>
    <property type="match status" value="1"/>
</dbReference>
<dbReference type="PANTHER" id="PTHR43055:SF1">
    <property type="entry name" value="FORMATE-DEPENDENT PHOSPHORIBOSYLGLYCINAMIDE FORMYLTRANSFERASE"/>
    <property type="match status" value="1"/>
</dbReference>
<dbReference type="Pfam" id="PF02222">
    <property type="entry name" value="ATP-grasp"/>
    <property type="match status" value="1"/>
</dbReference>
<dbReference type="Pfam" id="PF21244">
    <property type="entry name" value="PurT_C"/>
    <property type="match status" value="1"/>
</dbReference>
<dbReference type="Pfam" id="PF22660">
    <property type="entry name" value="RS_preATP-grasp-like"/>
    <property type="match status" value="1"/>
</dbReference>
<dbReference type="SUPFAM" id="SSF56059">
    <property type="entry name" value="Glutathione synthetase ATP-binding domain-like"/>
    <property type="match status" value="1"/>
</dbReference>
<dbReference type="SUPFAM" id="SSF52440">
    <property type="entry name" value="PreATP-grasp domain"/>
    <property type="match status" value="1"/>
</dbReference>
<dbReference type="SUPFAM" id="SSF51246">
    <property type="entry name" value="Rudiment single hybrid motif"/>
    <property type="match status" value="1"/>
</dbReference>
<dbReference type="PROSITE" id="PS50975">
    <property type="entry name" value="ATP_GRASP"/>
    <property type="match status" value="1"/>
</dbReference>
<accession>Q2IJJ5</accession>
<keyword id="KW-0067">ATP-binding</keyword>
<keyword id="KW-0436">Ligase</keyword>
<keyword id="KW-0460">Magnesium</keyword>
<keyword id="KW-0479">Metal-binding</keyword>
<keyword id="KW-0547">Nucleotide-binding</keyword>
<keyword id="KW-0658">Purine biosynthesis</keyword>
<keyword id="KW-1185">Reference proteome</keyword>